<protein>
    <recommendedName>
        <fullName evidence="1">Putative pre-16S rRNA nuclease</fullName>
        <ecNumber evidence="1">3.1.-.-</ecNumber>
    </recommendedName>
</protein>
<evidence type="ECO:0000255" key="1">
    <source>
        <dbReference type="HAMAP-Rule" id="MF_00651"/>
    </source>
</evidence>
<proteinExistence type="inferred from homology"/>
<keyword id="KW-0963">Cytoplasm</keyword>
<keyword id="KW-0378">Hydrolase</keyword>
<keyword id="KW-0540">Nuclease</keyword>
<keyword id="KW-0690">Ribosome biogenesis</keyword>
<gene>
    <name evidence="1" type="primary">yqgF</name>
    <name type="ordered locus">SeD_A3440</name>
</gene>
<feature type="chain" id="PRO_1000131067" description="Putative pre-16S rRNA nuclease">
    <location>
        <begin position="1"/>
        <end position="138"/>
    </location>
</feature>
<organism>
    <name type="scientific">Salmonella dublin (strain CT_02021853)</name>
    <dbReference type="NCBI Taxonomy" id="439851"/>
    <lineage>
        <taxon>Bacteria</taxon>
        <taxon>Pseudomonadati</taxon>
        <taxon>Pseudomonadota</taxon>
        <taxon>Gammaproteobacteria</taxon>
        <taxon>Enterobacterales</taxon>
        <taxon>Enterobacteriaceae</taxon>
        <taxon>Salmonella</taxon>
    </lineage>
</organism>
<comment type="function">
    <text evidence="1">Could be a nuclease involved in processing of the 5'-end of pre-16S rRNA.</text>
</comment>
<comment type="subcellular location">
    <subcellularLocation>
        <location evidence="1">Cytoplasm</location>
    </subcellularLocation>
</comment>
<comment type="similarity">
    <text evidence="1">Belongs to the YqgF nuclease family.</text>
</comment>
<dbReference type="EC" id="3.1.-.-" evidence="1"/>
<dbReference type="EMBL" id="CP001144">
    <property type="protein sequence ID" value="ACH74158.1"/>
    <property type="molecule type" value="Genomic_DNA"/>
</dbReference>
<dbReference type="SMR" id="B5FUW0"/>
<dbReference type="KEGG" id="sed:SeD_A3440"/>
<dbReference type="HOGENOM" id="CLU_098240_3_0_6"/>
<dbReference type="Proteomes" id="UP000008322">
    <property type="component" value="Chromosome"/>
</dbReference>
<dbReference type="GO" id="GO:0005829">
    <property type="term" value="C:cytosol"/>
    <property type="evidence" value="ECO:0007669"/>
    <property type="project" value="TreeGrafter"/>
</dbReference>
<dbReference type="GO" id="GO:0004518">
    <property type="term" value="F:nuclease activity"/>
    <property type="evidence" value="ECO:0007669"/>
    <property type="project" value="UniProtKB-KW"/>
</dbReference>
<dbReference type="GO" id="GO:0000967">
    <property type="term" value="P:rRNA 5'-end processing"/>
    <property type="evidence" value="ECO:0007669"/>
    <property type="project" value="UniProtKB-UniRule"/>
</dbReference>
<dbReference type="CDD" id="cd16964">
    <property type="entry name" value="YqgF"/>
    <property type="match status" value="1"/>
</dbReference>
<dbReference type="FunFam" id="3.30.420.140:FF:000002">
    <property type="entry name" value="Putative pre-16S rRNA nuclease"/>
    <property type="match status" value="1"/>
</dbReference>
<dbReference type="Gene3D" id="3.30.420.140">
    <property type="entry name" value="YqgF/RNase H-like domain"/>
    <property type="match status" value="1"/>
</dbReference>
<dbReference type="HAMAP" id="MF_00651">
    <property type="entry name" value="Nuclease_YqgF"/>
    <property type="match status" value="1"/>
</dbReference>
<dbReference type="InterPro" id="IPR012337">
    <property type="entry name" value="RNaseH-like_sf"/>
</dbReference>
<dbReference type="InterPro" id="IPR005227">
    <property type="entry name" value="YqgF"/>
</dbReference>
<dbReference type="InterPro" id="IPR006641">
    <property type="entry name" value="YqgF/RNaseH-like_dom"/>
</dbReference>
<dbReference type="InterPro" id="IPR037027">
    <property type="entry name" value="YqgF/RNaseH-like_dom_sf"/>
</dbReference>
<dbReference type="NCBIfam" id="TIGR00250">
    <property type="entry name" value="RNAse_H_YqgF"/>
    <property type="match status" value="1"/>
</dbReference>
<dbReference type="PANTHER" id="PTHR33317">
    <property type="entry name" value="POLYNUCLEOTIDYL TRANSFERASE, RIBONUCLEASE H-LIKE SUPERFAMILY PROTEIN"/>
    <property type="match status" value="1"/>
</dbReference>
<dbReference type="PANTHER" id="PTHR33317:SF4">
    <property type="entry name" value="POLYNUCLEOTIDYL TRANSFERASE, RIBONUCLEASE H-LIKE SUPERFAMILY PROTEIN"/>
    <property type="match status" value="1"/>
</dbReference>
<dbReference type="Pfam" id="PF03652">
    <property type="entry name" value="RuvX"/>
    <property type="match status" value="1"/>
</dbReference>
<dbReference type="SMART" id="SM00732">
    <property type="entry name" value="YqgFc"/>
    <property type="match status" value="1"/>
</dbReference>
<dbReference type="SUPFAM" id="SSF53098">
    <property type="entry name" value="Ribonuclease H-like"/>
    <property type="match status" value="1"/>
</dbReference>
<reference key="1">
    <citation type="journal article" date="2011" name="J. Bacteriol.">
        <title>Comparative genomics of 28 Salmonella enterica isolates: evidence for CRISPR-mediated adaptive sublineage evolution.</title>
        <authorList>
            <person name="Fricke W.F."/>
            <person name="Mammel M.K."/>
            <person name="McDermott P.F."/>
            <person name="Tartera C."/>
            <person name="White D.G."/>
            <person name="Leclerc J.E."/>
            <person name="Ravel J."/>
            <person name="Cebula T.A."/>
        </authorList>
    </citation>
    <scope>NUCLEOTIDE SEQUENCE [LARGE SCALE GENOMIC DNA]</scope>
    <source>
        <strain>CT_02021853</strain>
    </source>
</reference>
<accession>B5FUW0</accession>
<sequence length="138" mass="15248">MSDTLLAFDFGTKSIGVAIGQRITGTARPLPAIKAQDGTPDWMLIERLLKEWQPDEIIVGLPLNMDGTEQPLTARARKFANRIHGRFGVTVTLHDERLSTVEARSGLFERGGYRALNKGKVDSASAVIILESYFEQGY</sequence>
<name>YQGF_SALDC</name>